<dbReference type="EC" id="2.4.2.18" evidence="1"/>
<dbReference type="EMBL" id="AP006861">
    <property type="protein sequence ID" value="BAE81211.1"/>
    <property type="molecule type" value="Genomic_DNA"/>
</dbReference>
<dbReference type="RefSeq" id="WP_011457991.1">
    <property type="nucleotide sequence ID" value="NC_007899.1"/>
</dbReference>
<dbReference type="SMR" id="Q254S7"/>
<dbReference type="STRING" id="264202.CF0439"/>
<dbReference type="KEGG" id="cfe:CF0439"/>
<dbReference type="eggNOG" id="COG0547">
    <property type="taxonomic scope" value="Bacteria"/>
</dbReference>
<dbReference type="HOGENOM" id="CLU_034315_4_0_0"/>
<dbReference type="OrthoDB" id="9806430at2"/>
<dbReference type="UniPathway" id="UPA00035">
    <property type="reaction ID" value="UER00041"/>
</dbReference>
<dbReference type="Proteomes" id="UP000001260">
    <property type="component" value="Chromosome"/>
</dbReference>
<dbReference type="GO" id="GO:0005829">
    <property type="term" value="C:cytosol"/>
    <property type="evidence" value="ECO:0007669"/>
    <property type="project" value="TreeGrafter"/>
</dbReference>
<dbReference type="GO" id="GO:0004048">
    <property type="term" value="F:anthranilate phosphoribosyltransferase activity"/>
    <property type="evidence" value="ECO:0007669"/>
    <property type="project" value="UniProtKB-UniRule"/>
</dbReference>
<dbReference type="GO" id="GO:0000287">
    <property type="term" value="F:magnesium ion binding"/>
    <property type="evidence" value="ECO:0007669"/>
    <property type="project" value="UniProtKB-UniRule"/>
</dbReference>
<dbReference type="GO" id="GO:0000162">
    <property type="term" value="P:L-tryptophan biosynthetic process"/>
    <property type="evidence" value="ECO:0007669"/>
    <property type="project" value="UniProtKB-UniRule"/>
</dbReference>
<dbReference type="FunFam" id="3.40.1030.10:FF:000002">
    <property type="entry name" value="Anthranilate phosphoribosyltransferase"/>
    <property type="match status" value="1"/>
</dbReference>
<dbReference type="Gene3D" id="3.40.1030.10">
    <property type="entry name" value="Nucleoside phosphorylase/phosphoribosyltransferase catalytic domain"/>
    <property type="match status" value="1"/>
</dbReference>
<dbReference type="Gene3D" id="1.20.970.10">
    <property type="entry name" value="Transferase, Pyrimidine Nucleoside Phosphorylase, Chain C"/>
    <property type="match status" value="1"/>
</dbReference>
<dbReference type="HAMAP" id="MF_00211">
    <property type="entry name" value="TrpD"/>
    <property type="match status" value="1"/>
</dbReference>
<dbReference type="InterPro" id="IPR005940">
    <property type="entry name" value="Anthranilate_Pribosyl_Tfrase"/>
</dbReference>
<dbReference type="InterPro" id="IPR000312">
    <property type="entry name" value="Glycosyl_Trfase_fam3"/>
</dbReference>
<dbReference type="InterPro" id="IPR017459">
    <property type="entry name" value="Glycosyl_Trfase_fam3_N_dom"/>
</dbReference>
<dbReference type="InterPro" id="IPR036320">
    <property type="entry name" value="Glycosyl_Trfase_fam3_N_dom_sf"/>
</dbReference>
<dbReference type="InterPro" id="IPR035902">
    <property type="entry name" value="Nuc_phospho_transferase"/>
</dbReference>
<dbReference type="NCBIfam" id="TIGR01245">
    <property type="entry name" value="trpD"/>
    <property type="match status" value="1"/>
</dbReference>
<dbReference type="PANTHER" id="PTHR43285">
    <property type="entry name" value="ANTHRANILATE PHOSPHORIBOSYLTRANSFERASE"/>
    <property type="match status" value="1"/>
</dbReference>
<dbReference type="PANTHER" id="PTHR43285:SF2">
    <property type="entry name" value="ANTHRANILATE PHOSPHORIBOSYLTRANSFERASE"/>
    <property type="match status" value="1"/>
</dbReference>
<dbReference type="Pfam" id="PF02885">
    <property type="entry name" value="Glycos_trans_3N"/>
    <property type="match status" value="1"/>
</dbReference>
<dbReference type="Pfam" id="PF00591">
    <property type="entry name" value="Glycos_transf_3"/>
    <property type="match status" value="1"/>
</dbReference>
<dbReference type="SUPFAM" id="SSF52418">
    <property type="entry name" value="Nucleoside phosphorylase/phosphoribosyltransferase catalytic domain"/>
    <property type="match status" value="1"/>
</dbReference>
<dbReference type="SUPFAM" id="SSF47648">
    <property type="entry name" value="Nucleoside phosphorylase/phosphoribosyltransferase N-terminal domain"/>
    <property type="match status" value="1"/>
</dbReference>
<reference key="1">
    <citation type="journal article" date="2006" name="DNA Res.">
        <title>Genome sequence of the cat pathogen, Chlamydophila felis.</title>
        <authorList>
            <person name="Azuma Y."/>
            <person name="Hirakawa H."/>
            <person name="Yamashita A."/>
            <person name="Cai Y."/>
            <person name="Rahman M.A."/>
            <person name="Suzuki H."/>
            <person name="Mitaku S."/>
            <person name="Toh H."/>
            <person name="Goto S."/>
            <person name="Murakami T."/>
            <person name="Sugi K."/>
            <person name="Hayashi H."/>
            <person name="Fukushi H."/>
            <person name="Hattori M."/>
            <person name="Kuhara S."/>
            <person name="Shirai M."/>
        </authorList>
    </citation>
    <scope>NUCLEOTIDE SEQUENCE [LARGE SCALE GENOMIC DNA]</scope>
    <source>
        <strain>Fe/C-56</strain>
    </source>
</reference>
<sequence>MLQTYLQSIMNQSHLTYDEAESVTNLMLNGSDPHQIAAFLAVLKYRGETPTEIAGMVSALQKQATSVDLPFPALDIVGTGGDLANTVNISTGSAILSAACGIPIAKHGNRSVSSQSGSADVLEALGIEIEMTPEELLSCIQEVGIGFMFAPIYHPSLKKLAPIRKGMKIPSTFNILGPLLNPANTEYSLIGVSNEPILELMSEVCLQFQNTQRTFLFHGSGLDELTTLGKVVGYDIQQGKKTRIEIDPTSFGFASCKIEELKGGDSKMNAFILKKAFSGQQGAIADALIFNAGAAVWIFGNATTLEEGIQIARQTLMEGEALRVLEKWVAFSQQLKLKRGSCN</sequence>
<gene>
    <name evidence="1" type="primary">trpD</name>
    <name type="ordered locus">CF0439</name>
</gene>
<protein>
    <recommendedName>
        <fullName evidence="1">Anthranilate phosphoribosyltransferase</fullName>
        <ecNumber evidence="1">2.4.2.18</ecNumber>
    </recommendedName>
</protein>
<accession>Q254S7</accession>
<name>TRPD_CHLFF</name>
<comment type="function">
    <text evidence="1">Catalyzes the transfer of the phosphoribosyl group of 5-phosphorylribose-1-pyrophosphate (PRPP) to anthranilate to yield N-(5'-phosphoribosyl)-anthranilate (PRA).</text>
</comment>
<comment type="catalytic activity">
    <reaction evidence="1">
        <text>N-(5-phospho-beta-D-ribosyl)anthranilate + diphosphate = 5-phospho-alpha-D-ribose 1-diphosphate + anthranilate</text>
        <dbReference type="Rhea" id="RHEA:11768"/>
        <dbReference type="ChEBI" id="CHEBI:16567"/>
        <dbReference type="ChEBI" id="CHEBI:18277"/>
        <dbReference type="ChEBI" id="CHEBI:33019"/>
        <dbReference type="ChEBI" id="CHEBI:58017"/>
        <dbReference type="EC" id="2.4.2.18"/>
    </reaction>
</comment>
<comment type="cofactor">
    <cofactor evidence="1">
        <name>Mg(2+)</name>
        <dbReference type="ChEBI" id="CHEBI:18420"/>
    </cofactor>
    <text evidence="1">Binds 2 magnesium ions per monomer.</text>
</comment>
<comment type="pathway">
    <text evidence="1">Amino-acid biosynthesis; L-tryptophan biosynthesis; L-tryptophan from chorismate: step 2/5.</text>
</comment>
<comment type="subunit">
    <text evidence="1">Homodimer.</text>
</comment>
<comment type="similarity">
    <text evidence="1">Belongs to the anthranilate phosphoribosyltransferase family.</text>
</comment>
<evidence type="ECO:0000255" key="1">
    <source>
        <dbReference type="HAMAP-Rule" id="MF_00211"/>
    </source>
</evidence>
<feature type="chain" id="PRO_1000043003" description="Anthranilate phosphoribosyltransferase">
    <location>
        <begin position="1"/>
        <end position="343"/>
    </location>
</feature>
<feature type="binding site" evidence="1">
    <location>
        <position position="78"/>
    </location>
    <ligand>
        <name>5-phospho-alpha-D-ribose 1-diphosphate</name>
        <dbReference type="ChEBI" id="CHEBI:58017"/>
    </ligand>
</feature>
<feature type="binding site" evidence="1">
    <location>
        <position position="78"/>
    </location>
    <ligand>
        <name>anthranilate</name>
        <dbReference type="ChEBI" id="CHEBI:16567"/>
        <label>1</label>
    </ligand>
</feature>
<feature type="binding site" evidence="1">
    <location>
        <begin position="81"/>
        <end position="82"/>
    </location>
    <ligand>
        <name>5-phospho-alpha-D-ribose 1-diphosphate</name>
        <dbReference type="ChEBI" id="CHEBI:58017"/>
    </ligand>
</feature>
<feature type="binding site" evidence="1">
    <location>
        <position position="86"/>
    </location>
    <ligand>
        <name>5-phospho-alpha-D-ribose 1-diphosphate</name>
        <dbReference type="ChEBI" id="CHEBI:58017"/>
    </ligand>
</feature>
<feature type="binding site" evidence="1">
    <location>
        <begin position="88"/>
        <end position="91"/>
    </location>
    <ligand>
        <name>5-phospho-alpha-D-ribose 1-diphosphate</name>
        <dbReference type="ChEBI" id="CHEBI:58017"/>
    </ligand>
</feature>
<feature type="binding site" evidence="1">
    <location>
        <position position="90"/>
    </location>
    <ligand>
        <name>Mg(2+)</name>
        <dbReference type="ChEBI" id="CHEBI:18420"/>
        <label>1</label>
    </ligand>
</feature>
<feature type="binding site" evidence="1">
    <location>
        <begin position="106"/>
        <end position="114"/>
    </location>
    <ligand>
        <name>5-phospho-alpha-D-ribose 1-diphosphate</name>
        <dbReference type="ChEBI" id="CHEBI:58017"/>
    </ligand>
</feature>
<feature type="binding site" evidence="1">
    <location>
        <position position="109"/>
    </location>
    <ligand>
        <name>anthranilate</name>
        <dbReference type="ChEBI" id="CHEBI:16567"/>
        <label>1</label>
    </ligand>
</feature>
<feature type="binding site" evidence="1">
    <location>
        <position position="118"/>
    </location>
    <ligand>
        <name>5-phospho-alpha-D-ribose 1-diphosphate</name>
        <dbReference type="ChEBI" id="CHEBI:58017"/>
    </ligand>
</feature>
<feature type="binding site" evidence="1">
    <location>
        <position position="164"/>
    </location>
    <ligand>
        <name>anthranilate</name>
        <dbReference type="ChEBI" id="CHEBI:16567"/>
        <label>2</label>
    </ligand>
</feature>
<feature type="binding site" evidence="1">
    <location>
        <position position="223"/>
    </location>
    <ligand>
        <name>Mg(2+)</name>
        <dbReference type="ChEBI" id="CHEBI:18420"/>
        <label>2</label>
    </ligand>
</feature>
<feature type="binding site" evidence="1">
    <location>
        <position position="224"/>
    </location>
    <ligand>
        <name>Mg(2+)</name>
        <dbReference type="ChEBI" id="CHEBI:18420"/>
        <label>1</label>
    </ligand>
</feature>
<feature type="binding site" evidence="1">
    <location>
        <position position="224"/>
    </location>
    <ligand>
        <name>Mg(2+)</name>
        <dbReference type="ChEBI" id="CHEBI:18420"/>
        <label>2</label>
    </ligand>
</feature>
<keyword id="KW-0028">Amino-acid biosynthesis</keyword>
<keyword id="KW-0057">Aromatic amino acid biosynthesis</keyword>
<keyword id="KW-0328">Glycosyltransferase</keyword>
<keyword id="KW-0460">Magnesium</keyword>
<keyword id="KW-0479">Metal-binding</keyword>
<keyword id="KW-0808">Transferase</keyword>
<keyword id="KW-0822">Tryptophan biosynthesis</keyword>
<proteinExistence type="inferred from homology"/>
<organism>
    <name type="scientific">Chlamydia felis (strain Fe/C-56)</name>
    <name type="common">Chlamydophila felis</name>
    <dbReference type="NCBI Taxonomy" id="264202"/>
    <lineage>
        <taxon>Bacteria</taxon>
        <taxon>Pseudomonadati</taxon>
        <taxon>Chlamydiota</taxon>
        <taxon>Chlamydiia</taxon>
        <taxon>Chlamydiales</taxon>
        <taxon>Chlamydiaceae</taxon>
        <taxon>Chlamydia/Chlamydophila group</taxon>
        <taxon>Chlamydia</taxon>
    </lineage>
</organism>